<keyword id="KW-0963">Cytoplasm</keyword>
<keyword id="KW-0489">Methyltransferase</keyword>
<keyword id="KW-0949">S-adenosyl-L-methionine</keyword>
<keyword id="KW-0808">Transferase</keyword>
<keyword id="KW-0819">tRNA processing</keyword>
<gene>
    <name evidence="1" type="primary">trmD</name>
    <name type="ordered locus">Tmel_1802</name>
</gene>
<sequence>MRISILTIFPEMVEIVKKYGVISRAIKNGILEIEIFNLRDFTNDKHKTVDDYPFGGGPGMVMKPEPFFNFFEYYKERYGNTYTILTSPQGDRLTNHLVKELSEKESILIICGRYEGIDERVTKFVDREISIGDYVLTGGELPAMVIVDAVSRFIPDVIDKKSVEQETFNTGLLDHPHYTRPRNYKGLEVPEVLLSGDHKKIEIWRRKMALKKTMLKRPDLFLNKDLDGVDKVALLDLFRELINNAK</sequence>
<feature type="chain" id="PRO_1000006537" description="tRNA (guanine-N(1)-)-methyltransferase">
    <location>
        <begin position="1"/>
        <end position="246"/>
    </location>
</feature>
<feature type="binding site" evidence="1">
    <location>
        <position position="112"/>
    </location>
    <ligand>
        <name>S-adenosyl-L-methionine</name>
        <dbReference type="ChEBI" id="CHEBI:59789"/>
    </ligand>
</feature>
<feature type="binding site" evidence="1">
    <location>
        <begin position="131"/>
        <end position="136"/>
    </location>
    <ligand>
        <name>S-adenosyl-L-methionine</name>
        <dbReference type="ChEBI" id="CHEBI:59789"/>
    </ligand>
</feature>
<name>TRMD_THEM4</name>
<reference key="1">
    <citation type="submission" date="2007-05" db="EMBL/GenBank/DDBJ databases">
        <title>Complete sequence of Thermosipho melanesiensis BI429.</title>
        <authorList>
            <consortium name="US DOE Joint Genome Institute"/>
            <person name="Copeland A."/>
            <person name="Lucas S."/>
            <person name="Lapidus A."/>
            <person name="Barry K."/>
            <person name="Glavina del Rio T."/>
            <person name="Dalin E."/>
            <person name="Tice H."/>
            <person name="Pitluck S."/>
            <person name="Chertkov O."/>
            <person name="Brettin T."/>
            <person name="Bruce D."/>
            <person name="Detter J.C."/>
            <person name="Han C."/>
            <person name="Schmutz J."/>
            <person name="Larimer F."/>
            <person name="Land M."/>
            <person name="Hauser L."/>
            <person name="Kyrpides N."/>
            <person name="Mikhailova N."/>
            <person name="Nelson K."/>
            <person name="Gogarten J.P."/>
            <person name="Noll K."/>
            <person name="Richardson P."/>
        </authorList>
    </citation>
    <scope>NUCLEOTIDE SEQUENCE [LARGE SCALE GENOMIC DNA]</scope>
    <source>
        <strain>DSM 12029 / CIP 104789 / BI429</strain>
    </source>
</reference>
<dbReference type="EC" id="2.1.1.228" evidence="1"/>
<dbReference type="EMBL" id="CP000716">
    <property type="protein sequence ID" value="ABR31637.1"/>
    <property type="molecule type" value="Genomic_DNA"/>
</dbReference>
<dbReference type="RefSeq" id="WP_012057995.1">
    <property type="nucleotide sequence ID" value="NC_009616.1"/>
</dbReference>
<dbReference type="SMR" id="A6LNY6"/>
<dbReference type="STRING" id="391009.Tmel_1802"/>
<dbReference type="KEGG" id="tme:Tmel_1802"/>
<dbReference type="eggNOG" id="COG0336">
    <property type="taxonomic scope" value="Bacteria"/>
</dbReference>
<dbReference type="HOGENOM" id="CLU_047363_0_1_0"/>
<dbReference type="OrthoDB" id="9807416at2"/>
<dbReference type="Proteomes" id="UP000001110">
    <property type="component" value="Chromosome"/>
</dbReference>
<dbReference type="GO" id="GO:0005829">
    <property type="term" value="C:cytosol"/>
    <property type="evidence" value="ECO:0007669"/>
    <property type="project" value="TreeGrafter"/>
</dbReference>
<dbReference type="GO" id="GO:0052906">
    <property type="term" value="F:tRNA (guanine(37)-N1)-methyltransferase activity"/>
    <property type="evidence" value="ECO:0007669"/>
    <property type="project" value="UniProtKB-UniRule"/>
</dbReference>
<dbReference type="GO" id="GO:0002939">
    <property type="term" value="P:tRNA N1-guanine methylation"/>
    <property type="evidence" value="ECO:0007669"/>
    <property type="project" value="TreeGrafter"/>
</dbReference>
<dbReference type="CDD" id="cd18080">
    <property type="entry name" value="TrmD-like"/>
    <property type="match status" value="1"/>
</dbReference>
<dbReference type="FunFam" id="1.10.1270.20:FF:000001">
    <property type="entry name" value="tRNA (guanine-N(1)-)-methyltransferase"/>
    <property type="match status" value="1"/>
</dbReference>
<dbReference type="FunFam" id="3.40.1280.10:FF:000001">
    <property type="entry name" value="tRNA (guanine-N(1)-)-methyltransferase"/>
    <property type="match status" value="1"/>
</dbReference>
<dbReference type="Gene3D" id="3.40.1280.10">
    <property type="match status" value="1"/>
</dbReference>
<dbReference type="Gene3D" id="1.10.1270.20">
    <property type="entry name" value="tRNA(m1g37)methyltransferase, domain 2"/>
    <property type="match status" value="1"/>
</dbReference>
<dbReference type="HAMAP" id="MF_00605">
    <property type="entry name" value="TrmD"/>
    <property type="match status" value="1"/>
</dbReference>
<dbReference type="InterPro" id="IPR029028">
    <property type="entry name" value="Alpha/beta_knot_MTases"/>
</dbReference>
<dbReference type="InterPro" id="IPR023148">
    <property type="entry name" value="tRNA_m1G_MeTrfase_C_sf"/>
</dbReference>
<dbReference type="InterPro" id="IPR002649">
    <property type="entry name" value="tRNA_m1G_MeTrfase_TrmD"/>
</dbReference>
<dbReference type="InterPro" id="IPR029026">
    <property type="entry name" value="tRNA_m1G_MTases_N"/>
</dbReference>
<dbReference type="InterPro" id="IPR016009">
    <property type="entry name" value="tRNA_MeTrfase_TRMD/TRM10"/>
</dbReference>
<dbReference type="NCBIfam" id="NF000648">
    <property type="entry name" value="PRK00026.1"/>
    <property type="match status" value="1"/>
</dbReference>
<dbReference type="NCBIfam" id="TIGR00088">
    <property type="entry name" value="trmD"/>
    <property type="match status" value="1"/>
</dbReference>
<dbReference type="PANTHER" id="PTHR46417">
    <property type="entry name" value="TRNA (GUANINE-N(1)-)-METHYLTRANSFERASE"/>
    <property type="match status" value="1"/>
</dbReference>
<dbReference type="PANTHER" id="PTHR46417:SF1">
    <property type="entry name" value="TRNA (GUANINE-N(1)-)-METHYLTRANSFERASE"/>
    <property type="match status" value="1"/>
</dbReference>
<dbReference type="Pfam" id="PF01746">
    <property type="entry name" value="tRNA_m1G_MT"/>
    <property type="match status" value="1"/>
</dbReference>
<dbReference type="PIRSF" id="PIRSF000386">
    <property type="entry name" value="tRNA_mtase"/>
    <property type="match status" value="1"/>
</dbReference>
<dbReference type="SUPFAM" id="SSF75217">
    <property type="entry name" value="alpha/beta knot"/>
    <property type="match status" value="1"/>
</dbReference>
<protein>
    <recommendedName>
        <fullName evidence="1">tRNA (guanine-N(1)-)-methyltransferase</fullName>
        <ecNumber evidence="1">2.1.1.228</ecNumber>
    </recommendedName>
    <alternativeName>
        <fullName evidence="1">M1G-methyltransferase</fullName>
    </alternativeName>
    <alternativeName>
        <fullName evidence="1">tRNA [GM37] methyltransferase</fullName>
    </alternativeName>
</protein>
<accession>A6LNY6</accession>
<proteinExistence type="inferred from homology"/>
<comment type="function">
    <text evidence="1">Specifically methylates guanosine-37 in various tRNAs.</text>
</comment>
<comment type="catalytic activity">
    <reaction evidence="1">
        <text>guanosine(37) in tRNA + S-adenosyl-L-methionine = N(1)-methylguanosine(37) in tRNA + S-adenosyl-L-homocysteine + H(+)</text>
        <dbReference type="Rhea" id="RHEA:36899"/>
        <dbReference type="Rhea" id="RHEA-COMP:10145"/>
        <dbReference type="Rhea" id="RHEA-COMP:10147"/>
        <dbReference type="ChEBI" id="CHEBI:15378"/>
        <dbReference type="ChEBI" id="CHEBI:57856"/>
        <dbReference type="ChEBI" id="CHEBI:59789"/>
        <dbReference type="ChEBI" id="CHEBI:73542"/>
        <dbReference type="ChEBI" id="CHEBI:74269"/>
        <dbReference type="EC" id="2.1.1.228"/>
    </reaction>
</comment>
<comment type="subunit">
    <text evidence="1">Homodimer.</text>
</comment>
<comment type="subcellular location">
    <subcellularLocation>
        <location evidence="1">Cytoplasm</location>
    </subcellularLocation>
</comment>
<comment type="similarity">
    <text evidence="1">Belongs to the RNA methyltransferase TrmD family.</text>
</comment>
<evidence type="ECO:0000255" key="1">
    <source>
        <dbReference type="HAMAP-Rule" id="MF_00605"/>
    </source>
</evidence>
<organism>
    <name type="scientific">Thermosipho melanesiensis (strain DSM 12029 / CIP 104789 / BI429)</name>
    <dbReference type="NCBI Taxonomy" id="391009"/>
    <lineage>
        <taxon>Bacteria</taxon>
        <taxon>Thermotogati</taxon>
        <taxon>Thermotogota</taxon>
        <taxon>Thermotogae</taxon>
        <taxon>Thermotogales</taxon>
        <taxon>Fervidobacteriaceae</taxon>
        <taxon>Thermosipho</taxon>
    </lineage>
</organism>